<dbReference type="EMBL" id="CP001022">
    <property type="protein sequence ID" value="ACB62128.1"/>
    <property type="molecule type" value="Genomic_DNA"/>
</dbReference>
<dbReference type="RefSeq" id="WP_012371544.1">
    <property type="nucleotide sequence ID" value="NC_010556.1"/>
</dbReference>
<dbReference type="SMR" id="B1YMR8"/>
<dbReference type="STRING" id="262543.Exig_2680"/>
<dbReference type="KEGG" id="esi:Exig_2680"/>
<dbReference type="eggNOG" id="COG0711">
    <property type="taxonomic scope" value="Bacteria"/>
</dbReference>
<dbReference type="HOGENOM" id="CLU_079215_4_2_9"/>
<dbReference type="OrthoDB" id="282095at2"/>
<dbReference type="Proteomes" id="UP000001681">
    <property type="component" value="Chromosome"/>
</dbReference>
<dbReference type="GO" id="GO:0005886">
    <property type="term" value="C:plasma membrane"/>
    <property type="evidence" value="ECO:0007669"/>
    <property type="project" value="UniProtKB-SubCell"/>
</dbReference>
<dbReference type="GO" id="GO:0045259">
    <property type="term" value="C:proton-transporting ATP synthase complex"/>
    <property type="evidence" value="ECO:0007669"/>
    <property type="project" value="UniProtKB-KW"/>
</dbReference>
<dbReference type="GO" id="GO:0046933">
    <property type="term" value="F:proton-transporting ATP synthase activity, rotational mechanism"/>
    <property type="evidence" value="ECO:0007669"/>
    <property type="project" value="UniProtKB-UniRule"/>
</dbReference>
<dbReference type="GO" id="GO:0046961">
    <property type="term" value="F:proton-transporting ATPase activity, rotational mechanism"/>
    <property type="evidence" value="ECO:0007669"/>
    <property type="project" value="TreeGrafter"/>
</dbReference>
<dbReference type="CDD" id="cd06503">
    <property type="entry name" value="ATP-synt_Fo_b"/>
    <property type="match status" value="1"/>
</dbReference>
<dbReference type="HAMAP" id="MF_01398">
    <property type="entry name" value="ATP_synth_b_bprime"/>
    <property type="match status" value="1"/>
</dbReference>
<dbReference type="InterPro" id="IPR002146">
    <property type="entry name" value="ATP_synth_b/b'su_bac/chlpt"/>
</dbReference>
<dbReference type="InterPro" id="IPR005864">
    <property type="entry name" value="ATP_synth_F0_bsu_bac"/>
</dbReference>
<dbReference type="InterPro" id="IPR050059">
    <property type="entry name" value="ATP_synthase_B_chain"/>
</dbReference>
<dbReference type="NCBIfam" id="TIGR01144">
    <property type="entry name" value="ATP_synt_b"/>
    <property type="match status" value="1"/>
</dbReference>
<dbReference type="PANTHER" id="PTHR33445:SF1">
    <property type="entry name" value="ATP SYNTHASE SUBUNIT B"/>
    <property type="match status" value="1"/>
</dbReference>
<dbReference type="PANTHER" id="PTHR33445">
    <property type="entry name" value="ATP SYNTHASE SUBUNIT B', CHLOROPLASTIC"/>
    <property type="match status" value="1"/>
</dbReference>
<dbReference type="Pfam" id="PF00430">
    <property type="entry name" value="ATP-synt_B"/>
    <property type="match status" value="1"/>
</dbReference>
<keyword id="KW-0066">ATP synthesis</keyword>
<keyword id="KW-1003">Cell membrane</keyword>
<keyword id="KW-0138">CF(0)</keyword>
<keyword id="KW-0375">Hydrogen ion transport</keyword>
<keyword id="KW-0406">Ion transport</keyword>
<keyword id="KW-0472">Membrane</keyword>
<keyword id="KW-1185">Reference proteome</keyword>
<keyword id="KW-0812">Transmembrane</keyword>
<keyword id="KW-1133">Transmembrane helix</keyword>
<keyword id="KW-0813">Transport</keyword>
<evidence type="ECO:0000255" key="1">
    <source>
        <dbReference type="HAMAP-Rule" id="MF_01398"/>
    </source>
</evidence>
<feature type="chain" id="PRO_0000368483" description="ATP synthase subunit b">
    <location>
        <begin position="1"/>
        <end position="177"/>
    </location>
</feature>
<feature type="transmembrane region" description="Helical" evidence="1">
    <location>
        <begin position="16"/>
        <end position="36"/>
    </location>
</feature>
<accession>B1YMR8</accession>
<organism>
    <name type="scientific">Exiguobacterium sibiricum (strain DSM 17290 / CCUG 55495 / CIP 109462 / JCM 13490 / 255-15)</name>
    <dbReference type="NCBI Taxonomy" id="262543"/>
    <lineage>
        <taxon>Bacteria</taxon>
        <taxon>Bacillati</taxon>
        <taxon>Bacillota</taxon>
        <taxon>Bacilli</taxon>
        <taxon>Bacillales</taxon>
        <taxon>Bacillales Family XII. Incertae Sedis</taxon>
        <taxon>Exiguobacterium</taxon>
    </lineage>
</organism>
<reference key="1">
    <citation type="submission" date="2008-04" db="EMBL/GenBank/DDBJ databases">
        <title>Complete sequence of chromosome of Exiguobacterium sibiricum 255-15.</title>
        <authorList>
            <consortium name="US DOE Joint Genome Institute"/>
            <person name="Copeland A."/>
            <person name="Lucas S."/>
            <person name="Lapidus A."/>
            <person name="Glavina del Rio T."/>
            <person name="Dalin E."/>
            <person name="Tice H."/>
            <person name="Bruce D."/>
            <person name="Goodwin L."/>
            <person name="Pitluck S."/>
            <person name="Kiss H."/>
            <person name="Chertkov O."/>
            <person name="Monk C."/>
            <person name="Brettin T."/>
            <person name="Detter J.C."/>
            <person name="Han C."/>
            <person name="Kuske C.R."/>
            <person name="Schmutz J."/>
            <person name="Larimer F."/>
            <person name="Land M."/>
            <person name="Hauser L."/>
            <person name="Kyrpides N."/>
            <person name="Mikhailova N."/>
            <person name="Vishnivetskaya T."/>
            <person name="Rodrigues D.F."/>
            <person name="Gilichinsky D."/>
            <person name="Tiedje J."/>
            <person name="Richardson P."/>
        </authorList>
    </citation>
    <scope>NUCLEOTIDE SEQUENCE [LARGE SCALE GENOMIC DNA]</scope>
    <source>
        <strain>DSM 17290 / CCUG 55495 / CIP 109462 / JCM 13490 / 255-15</strain>
    </source>
</reference>
<comment type="function">
    <text evidence="1">F(1)F(0) ATP synthase produces ATP from ADP in the presence of a proton or sodium gradient. F-type ATPases consist of two structural domains, F(1) containing the extramembraneous catalytic core and F(0) containing the membrane proton channel, linked together by a central stalk and a peripheral stalk. During catalysis, ATP synthesis in the catalytic domain of F(1) is coupled via a rotary mechanism of the central stalk subunits to proton translocation.</text>
</comment>
<comment type="function">
    <text evidence="1">Component of the F(0) channel, it forms part of the peripheral stalk, linking F(1) to F(0).</text>
</comment>
<comment type="subunit">
    <text evidence="1">F-type ATPases have 2 components, F(1) - the catalytic core - and F(0) - the membrane proton channel. F(1) has five subunits: alpha(3), beta(3), gamma(1), delta(1), epsilon(1). F(0) has three main subunits: a(1), b(2) and c(10-14). The alpha and beta chains form an alternating ring which encloses part of the gamma chain. F(1) is attached to F(0) by a central stalk formed by the gamma and epsilon chains, while a peripheral stalk is formed by the delta and b chains.</text>
</comment>
<comment type="subcellular location">
    <subcellularLocation>
        <location evidence="1">Cell membrane</location>
        <topology evidence="1">Single-pass membrane protein</topology>
    </subcellularLocation>
</comment>
<comment type="similarity">
    <text evidence="1">Belongs to the ATPase B chain family.</text>
</comment>
<protein>
    <recommendedName>
        <fullName evidence="1">ATP synthase subunit b</fullName>
    </recommendedName>
    <alternativeName>
        <fullName evidence="1">ATP synthase F(0) sector subunit b</fullName>
    </alternativeName>
    <alternativeName>
        <fullName evidence="1">ATPase subunit I</fullName>
    </alternativeName>
    <alternativeName>
        <fullName evidence="1">F-type ATPase subunit b</fullName>
        <shortName evidence="1">F-ATPase subunit b</shortName>
    </alternativeName>
</protein>
<sequence>MNLTYRAAEGVAESNHLLLANMIVTIVVFLLLLILLKKFAWGPLVNMMKAREEHVASEINSAEKSRKDAEVYVEQQQAELNKARTEARDLLEASRRQAEAEQARAMEQARVETELSKEEARRAIERERAEAQAALKNDVALQAIAAARHVMKTQLATDEAAQRALVDQFLADTKGTN</sequence>
<gene>
    <name evidence="1" type="primary">atpF</name>
    <name type="ordered locus">Exig_2680</name>
</gene>
<name>ATPF_EXIS2</name>
<proteinExistence type="inferred from homology"/>